<dbReference type="EC" id="3.1.2.22" evidence="2"/>
<dbReference type="EC" id="3.1.1.93" evidence="2"/>
<dbReference type="EMBL" id="BT020941">
    <property type="protein sequence ID" value="AAX08958.1"/>
    <property type="molecule type" value="mRNA"/>
</dbReference>
<dbReference type="EMBL" id="BC112739">
    <property type="protein sequence ID" value="AAI12740.1"/>
    <property type="molecule type" value="mRNA"/>
</dbReference>
<dbReference type="RefSeq" id="NP_001015606.1">
    <property type="nucleotide sequence ID" value="NM_001015606.2"/>
</dbReference>
<dbReference type="SMR" id="Q5E9H9"/>
<dbReference type="FunCoup" id="Q5E9H9">
    <property type="interactions" value="1549"/>
</dbReference>
<dbReference type="STRING" id="9913.ENSBTAP00000006038"/>
<dbReference type="ESTHER" id="bovin-ABHDA">
    <property type="family name" value="ABHD10"/>
</dbReference>
<dbReference type="PaxDb" id="9913-ENSBTAP00000006038"/>
<dbReference type="GeneID" id="515563"/>
<dbReference type="KEGG" id="bta:515563"/>
<dbReference type="CTD" id="55347"/>
<dbReference type="VEuPathDB" id="HostDB:ENSBTAG00000004601"/>
<dbReference type="eggNOG" id="ENOG502QT21">
    <property type="taxonomic scope" value="Eukaryota"/>
</dbReference>
<dbReference type="HOGENOM" id="CLU_066961_0_0_1"/>
<dbReference type="InParanoid" id="Q5E9H9"/>
<dbReference type="OMA" id="TISRWLE"/>
<dbReference type="OrthoDB" id="408373at2759"/>
<dbReference type="TreeFam" id="TF329757"/>
<dbReference type="Reactome" id="R-BTA-156588">
    <property type="pathway name" value="Glucuronidation"/>
</dbReference>
<dbReference type="Proteomes" id="UP000009136">
    <property type="component" value="Chromosome 1"/>
</dbReference>
<dbReference type="Bgee" id="ENSBTAG00000004601">
    <property type="expression patterns" value="Expressed in oocyte and 105 other cell types or tissues"/>
</dbReference>
<dbReference type="GO" id="GO:0005739">
    <property type="term" value="C:mitochondrion"/>
    <property type="evidence" value="ECO:0000250"/>
    <property type="project" value="UniProtKB"/>
</dbReference>
<dbReference type="GO" id="GO:0004553">
    <property type="term" value="F:hydrolase activity, hydrolyzing O-glycosyl compounds"/>
    <property type="evidence" value="ECO:0000318"/>
    <property type="project" value="GO_Central"/>
</dbReference>
<dbReference type="GO" id="GO:0102390">
    <property type="term" value="F:mycophenolic acid acyl-glucuronide esterase activity"/>
    <property type="evidence" value="ECO:0007669"/>
    <property type="project" value="UniProtKB-EC"/>
</dbReference>
<dbReference type="GO" id="GO:0008474">
    <property type="term" value="F:palmitoyl-(protein) hydrolase activity"/>
    <property type="evidence" value="ECO:0000250"/>
    <property type="project" value="UniProtKB"/>
</dbReference>
<dbReference type="GO" id="GO:0002084">
    <property type="term" value="P:protein depalmitoylation"/>
    <property type="evidence" value="ECO:0000250"/>
    <property type="project" value="UniProtKB"/>
</dbReference>
<dbReference type="FunFam" id="3.40.50.1820:FF:000164">
    <property type="entry name" value="Mycophenolic acid acyl-glucuronide esterase, mitochondrial"/>
    <property type="match status" value="1"/>
</dbReference>
<dbReference type="Gene3D" id="3.40.50.1820">
    <property type="entry name" value="alpha/beta hydrolase"/>
    <property type="match status" value="1"/>
</dbReference>
<dbReference type="InterPro" id="IPR000073">
    <property type="entry name" value="AB_hydrolase_1"/>
</dbReference>
<dbReference type="InterPro" id="IPR029058">
    <property type="entry name" value="AB_hydrolase_fold"/>
</dbReference>
<dbReference type="InterPro" id="IPR052382">
    <property type="entry name" value="ABHD10_acyl-thioesterase"/>
</dbReference>
<dbReference type="PANTHER" id="PTHR16138">
    <property type="entry name" value="MYCOPHENOLIC ACID ACYL-GLUCURONIDE ESTERASE, MITOCHONDRIAL"/>
    <property type="match status" value="1"/>
</dbReference>
<dbReference type="PANTHER" id="PTHR16138:SF7">
    <property type="entry name" value="PALMITOYL-PROTEIN THIOESTERASE ABHD10, MITOCHONDRIAL"/>
    <property type="match status" value="1"/>
</dbReference>
<dbReference type="Pfam" id="PF00561">
    <property type="entry name" value="Abhydrolase_1"/>
    <property type="match status" value="1"/>
</dbReference>
<dbReference type="SUPFAM" id="SSF53474">
    <property type="entry name" value="alpha/beta-Hydrolases"/>
    <property type="match status" value="1"/>
</dbReference>
<name>ABHDA_BOVIN</name>
<feature type="transit peptide" description="Mitochondrion" evidence="3">
    <location>
        <begin position="1"/>
        <end position="52"/>
    </location>
</feature>
<feature type="chain" id="PRO_0000280732" description="Palmitoyl-protein thioesterase ABHD10, mitochondrial">
    <location>
        <begin position="53"/>
        <end position="306"/>
    </location>
</feature>
<feature type="domain" description="AB hydrolase-1" evidence="3">
    <location>
        <begin position="78"/>
        <end position="177"/>
    </location>
</feature>
<feature type="active site" description="Charge relay system" evidence="2">
    <location>
        <position position="152"/>
    </location>
</feature>
<feature type="active site" description="Charge relay system" evidence="1">
    <location>
        <position position="249"/>
    </location>
</feature>
<feature type="active site" description="Charge relay system" evidence="1">
    <location>
        <position position="279"/>
    </location>
</feature>
<organism>
    <name type="scientific">Bos taurus</name>
    <name type="common">Bovine</name>
    <dbReference type="NCBI Taxonomy" id="9913"/>
    <lineage>
        <taxon>Eukaryota</taxon>
        <taxon>Metazoa</taxon>
        <taxon>Chordata</taxon>
        <taxon>Craniata</taxon>
        <taxon>Vertebrata</taxon>
        <taxon>Euteleostomi</taxon>
        <taxon>Mammalia</taxon>
        <taxon>Eutheria</taxon>
        <taxon>Laurasiatheria</taxon>
        <taxon>Artiodactyla</taxon>
        <taxon>Ruminantia</taxon>
        <taxon>Pecora</taxon>
        <taxon>Bovidae</taxon>
        <taxon>Bovinae</taxon>
        <taxon>Bos</taxon>
    </lineage>
</organism>
<proteinExistence type="evidence at transcript level"/>
<gene>
    <name type="primary">ABHD10</name>
</gene>
<comment type="function">
    <text evidence="2">Acts as an acyl-protein thioesterase that hydrolyzes fatty acids from acylated residues in proteins. Regulates the mitochondrial S-depalmitoylation of the nucleophilic active site residue of peroxiredoxin-5/PRDX5, a key antioxidant protein, therefore modulating mitochondrial antioxidant ability. Also catalyzes the deglucuronidation of mycophenolic acid acyl-glucuronide, an active metabolite of the immunosuppressant drug mycophenolate.</text>
</comment>
<comment type="catalytic activity">
    <reaction evidence="2">
        <text>S-hexadecanoyl-L-cysteinyl-[protein] + H2O = L-cysteinyl-[protein] + hexadecanoate + H(+)</text>
        <dbReference type="Rhea" id="RHEA:19233"/>
        <dbReference type="Rhea" id="RHEA-COMP:10131"/>
        <dbReference type="Rhea" id="RHEA-COMP:11032"/>
        <dbReference type="ChEBI" id="CHEBI:7896"/>
        <dbReference type="ChEBI" id="CHEBI:15377"/>
        <dbReference type="ChEBI" id="CHEBI:15378"/>
        <dbReference type="ChEBI" id="CHEBI:29950"/>
        <dbReference type="ChEBI" id="CHEBI:74151"/>
        <dbReference type="EC" id="3.1.2.22"/>
    </reaction>
    <physiologicalReaction direction="left-to-right" evidence="2">
        <dbReference type="Rhea" id="RHEA:19234"/>
    </physiologicalReaction>
</comment>
<comment type="catalytic activity">
    <reaction evidence="2">
        <text>mycophenolic acid O-acyl-beta-D-glucuronide + H2O = mycophenolate + D-glucuronate + H(+)</text>
        <dbReference type="Rhea" id="RHEA:34179"/>
        <dbReference type="ChEBI" id="CHEBI:15377"/>
        <dbReference type="ChEBI" id="CHEBI:15378"/>
        <dbReference type="ChEBI" id="CHEBI:58720"/>
        <dbReference type="ChEBI" id="CHEBI:62932"/>
        <dbReference type="ChEBI" id="CHEBI:66982"/>
        <dbReference type="EC" id="3.1.1.93"/>
    </reaction>
    <physiologicalReaction direction="left-to-right" evidence="2">
        <dbReference type="Rhea" id="RHEA:34180"/>
    </physiologicalReaction>
</comment>
<comment type="activity regulation">
    <text evidence="2">Inhibited by palmostatin-B.</text>
</comment>
<comment type="subcellular location">
    <subcellularLocation>
        <location evidence="2">Mitochondrion</location>
    </subcellularLocation>
</comment>
<comment type="similarity">
    <text evidence="4">Belongs to the AB hydrolase superfamily.</text>
</comment>
<sequence>MAGVGLAAVPAWVPCRRWGLAAVTFGFHHGLSTLLARKTERAPQWLRACRHKTSISFLSRPDLPNLAYKRLKGKSPGIIFIPGYISNMNGTKALAIEEFCKSLGHAYIRFDYSGVGNSDGNLEECTVGKWRKDVLSIIDDLAEGPQILVGSSLGGWLMFHAAIARPQKVVALVGVATAVDGLVTQFNQLPIETKKEIEMKGVWPMPSKYSEEGVYRIQYSVIKEAEHHCLLHSPIPVKCPVRLLHGMKDDIVPWHTSVQVADRVVSTDVDVILRKNSDHRMKEKADIQLLVYTIDDLIDKLSTIVH</sequence>
<reference key="1">
    <citation type="journal article" date="2005" name="BMC Genomics">
        <title>Characterization of 954 bovine full-CDS cDNA sequences.</title>
        <authorList>
            <person name="Harhay G.P."/>
            <person name="Sonstegard T.S."/>
            <person name="Keele J.W."/>
            <person name="Heaton M.P."/>
            <person name="Clawson M.L."/>
            <person name="Snelling W.M."/>
            <person name="Wiedmann R.T."/>
            <person name="Van Tassell C.P."/>
            <person name="Smith T.P.L."/>
        </authorList>
    </citation>
    <scope>NUCLEOTIDE SEQUENCE [LARGE SCALE MRNA]</scope>
</reference>
<reference key="2">
    <citation type="submission" date="2006-01" db="EMBL/GenBank/DDBJ databases">
        <authorList>
            <consortium name="NIH - Mammalian Gene Collection (MGC) project"/>
        </authorList>
    </citation>
    <scope>NUCLEOTIDE SEQUENCE [LARGE SCALE MRNA]</scope>
    <source>
        <strain>Hereford</strain>
        <tissue>Hypothalamus</tissue>
    </source>
</reference>
<keyword id="KW-0378">Hydrolase</keyword>
<keyword id="KW-0496">Mitochondrion</keyword>
<keyword id="KW-1185">Reference proteome</keyword>
<keyword id="KW-0809">Transit peptide</keyword>
<evidence type="ECO:0000250" key="1">
    <source>
        <dbReference type="UniProtKB" id="Q8N2K0"/>
    </source>
</evidence>
<evidence type="ECO:0000250" key="2">
    <source>
        <dbReference type="UniProtKB" id="Q9NUJ1"/>
    </source>
</evidence>
<evidence type="ECO:0000255" key="3"/>
<evidence type="ECO:0000305" key="4"/>
<accession>Q5E9H9</accession>
<protein>
    <recommendedName>
        <fullName evidence="2">Palmitoyl-protein thioesterase ABHD10, mitochondrial</fullName>
        <ecNumber evidence="2">3.1.2.22</ecNumber>
    </recommendedName>
    <alternativeName>
        <fullName evidence="2">Acyl-protein thioesterase ABHD10</fullName>
    </alternativeName>
    <alternativeName>
        <fullName evidence="2">Alpha/beta hydrolase domain-containing protein 10</fullName>
        <shortName evidence="2">Abhydrolase domain-containing protein 10</shortName>
    </alternativeName>
    <alternativeName>
        <fullName evidence="2">Mycophenolic acid acyl-glucuronide esterase, mitochondrial</fullName>
        <ecNumber evidence="2">3.1.1.93</ecNumber>
    </alternativeName>
</protein>